<gene>
    <name evidence="1" type="primary">plsX</name>
    <name type="ordered locus">jhp_0187</name>
</gene>
<name>PLSX_HELPJ</name>
<protein>
    <recommendedName>
        <fullName evidence="1">Phosphate acyltransferase</fullName>
        <ecNumber evidence="1">2.3.1.274</ecNumber>
    </recommendedName>
    <alternativeName>
        <fullName evidence="1">Acyl-ACP phosphotransacylase</fullName>
    </alternativeName>
    <alternativeName>
        <fullName evidence="1">Acyl-[acyl-carrier-protein]--phosphate acyltransferase</fullName>
    </alternativeName>
    <alternativeName>
        <fullName evidence="1">Phosphate-acyl-ACP acyltransferase</fullName>
    </alternativeName>
</protein>
<comment type="function">
    <text evidence="1">Catalyzes the reversible formation of acyl-phosphate (acyl-PO(4)) from acyl-[acyl-carrier-protein] (acyl-ACP). This enzyme utilizes acyl-ACP as fatty acyl donor, but not acyl-CoA.</text>
</comment>
<comment type="catalytic activity">
    <reaction evidence="1">
        <text>a fatty acyl-[ACP] + phosphate = an acyl phosphate + holo-[ACP]</text>
        <dbReference type="Rhea" id="RHEA:42292"/>
        <dbReference type="Rhea" id="RHEA-COMP:9685"/>
        <dbReference type="Rhea" id="RHEA-COMP:14125"/>
        <dbReference type="ChEBI" id="CHEBI:43474"/>
        <dbReference type="ChEBI" id="CHEBI:59918"/>
        <dbReference type="ChEBI" id="CHEBI:64479"/>
        <dbReference type="ChEBI" id="CHEBI:138651"/>
        <dbReference type="EC" id="2.3.1.274"/>
    </reaction>
</comment>
<comment type="pathway">
    <text evidence="1">Lipid metabolism; phospholipid metabolism.</text>
</comment>
<comment type="subunit">
    <text evidence="1">Homodimer. Probably interacts with PlsY.</text>
</comment>
<comment type="subcellular location">
    <subcellularLocation>
        <location evidence="1">Cytoplasm</location>
    </subcellularLocation>
    <text evidence="1">Associated with the membrane possibly through PlsY.</text>
</comment>
<comment type="similarity">
    <text evidence="1">Belongs to the PlsX family.</text>
</comment>
<accession>Q9ZMN1</accession>
<reference key="1">
    <citation type="journal article" date="1999" name="Nature">
        <title>Genomic sequence comparison of two unrelated isolates of the human gastric pathogen Helicobacter pylori.</title>
        <authorList>
            <person name="Alm R.A."/>
            <person name="Ling L.-S.L."/>
            <person name="Moir D.T."/>
            <person name="King B.L."/>
            <person name="Brown E.D."/>
            <person name="Doig P.C."/>
            <person name="Smith D.R."/>
            <person name="Noonan B."/>
            <person name="Guild B.C."/>
            <person name="deJonge B.L."/>
            <person name="Carmel G."/>
            <person name="Tummino P.J."/>
            <person name="Caruso A."/>
            <person name="Uria-Nickelsen M."/>
            <person name="Mills D.M."/>
            <person name="Ives C."/>
            <person name="Gibson R."/>
            <person name="Merberg D."/>
            <person name="Mills S.D."/>
            <person name="Jiang Q."/>
            <person name="Taylor D.E."/>
            <person name="Vovis G.F."/>
            <person name="Trust T.J."/>
        </authorList>
    </citation>
    <scope>NUCLEOTIDE SEQUENCE [LARGE SCALE GENOMIC DNA]</scope>
    <source>
        <strain>J99 / ATCC 700824</strain>
    </source>
</reference>
<dbReference type="EC" id="2.3.1.274" evidence="1"/>
<dbReference type="EMBL" id="AE001439">
    <property type="protein sequence ID" value="AAD05770.1"/>
    <property type="molecule type" value="Genomic_DNA"/>
</dbReference>
<dbReference type="PIR" id="B71962">
    <property type="entry name" value="B71962"/>
</dbReference>
<dbReference type="RefSeq" id="WP_001881063.1">
    <property type="nucleotide sequence ID" value="NZ_CP011330.1"/>
</dbReference>
<dbReference type="SMR" id="Q9ZMN1"/>
<dbReference type="KEGG" id="hpj:jhp_0187"/>
<dbReference type="PATRIC" id="fig|85963.30.peg.834"/>
<dbReference type="eggNOG" id="COG0416">
    <property type="taxonomic scope" value="Bacteria"/>
</dbReference>
<dbReference type="UniPathway" id="UPA00085"/>
<dbReference type="Proteomes" id="UP000000804">
    <property type="component" value="Chromosome"/>
</dbReference>
<dbReference type="GO" id="GO:0005737">
    <property type="term" value="C:cytoplasm"/>
    <property type="evidence" value="ECO:0007669"/>
    <property type="project" value="UniProtKB-SubCell"/>
</dbReference>
<dbReference type="GO" id="GO:0043811">
    <property type="term" value="F:phosphate:acyl-[acyl carrier protein] acyltransferase activity"/>
    <property type="evidence" value="ECO:0007669"/>
    <property type="project" value="UniProtKB-UniRule"/>
</dbReference>
<dbReference type="GO" id="GO:0006633">
    <property type="term" value="P:fatty acid biosynthetic process"/>
    <property type="evidence" value="ECO:0007669"/>
    <property type="project" value="UniProtKB-UniRule"/>
</dbReference>
<dbReference type="GO" id="GO:0008654">
    <property type="term" value="P:phospholipid biosynthetic process"/>
    <property type="evidence" value="ECO:0007669"/>
    <property type="project" value="UniProtKB-KW"/>
</dbReference>
<dbReference type="Gene3D" id="3.40.718.10">
    <property type="entry name" value="Isopropylmalate Dehydrogenase"/>
    <property type="match status" value="1"/>
</dbReference>
<dbReference type="HAMAP" id="MF_00019">
    <property type="entry name" value="PlsX"/>
    <property type="match status" value="1"/>
</dbReference>
<dbReference type="InterPro" id="IPR003664">
    <property type="entry name" value="FA_synthesis"/>
</dbReference>
<dbReference type="InterPro" id="IPR012281">
    <property type="entry name" value="Phospholipid_synth_PlsX-like"/>
</dbReference>
<dbReference type="NCBIfam" id="TIGR00182">
    <property type="entry name" value="plsX"/>
    <property type="match status" value="1"/>
</dbReference>
<dbReference type="PANTHER" id="PTHR30100">
    <property type="entry name" value="FATTY ACID/PHOSPHOLIPID SYNTHESIS PROTEIN PLSX"/>
    <property type="match status" value="1"/>
</dbReference>
<dbReference type="PANTHER" id="PTHR30100:SF1">
    <property type="entry name" value="PHOSPHATE ACYLTRANSFERASE"/>
    <property type="match status" value="1"/>
</dbReference>
<dbReference type="Pfam" id="PF02504">
    <property type="entry name" value="FA_synthesis"/>
    <property type="match status" value="1"/>
</dbReference>
<dbReference type="PIRSF" id="PIRSF002465">
    <property type="entry name" value="Phsphlp_syn_PlsX"/>
    <property type="match status" value="1"/>
</dbReference>
<dbReference type="SUPFAM" id="SSF53659">
    <property type="entry name" value="Isocitrate/Isopropylmalate dehydrogenase-like"/>
    <property type="match status" value="1"/>
</dbReference>
<evidence type="ECO:0000255" key="1">
    <source>
        <dbReference type="HAMAP-Rule" id="MF_00019"/>
    </source>
</evidence>
<sequence>MKIVIDLMGADHGVLPIIEGVSRALENKSFSVVLVGDKDKATPFISKELASKVEMIHTQDYIKMEEAATEAIKRKESSIYLGMDILKNGADALISAGHSGATMGLATLRLGRIKGVERPAICTLMPSVGKRPSVLLDAGANTDCKPEYLIDFALMGYEYAKSVLHYDSPKVGLLSNGEEDIKGNTLVKETHKMLKAYDFFYGNVEGSDIFKGVVDVVVCDGFMGNVVLKTTEGVASAIGSIFKDEIKSSFKSKMGALMLKNAFGILKQKTDYAEYGGAPLLGVNKSVIISHGKSNARAVECAIYQAISAVESQVCLRITQAFESLKSQSFESQSDQQDA</sequence>
<organism>
    <name type="scientific">Helicobacter pylori (strain J99 / ATCC 700824)</name>
    <name type="common">Campylobacter pylori J99</name>
    <dbReference type="NCBI Taxonomy" id="85963"/>
    <lineage>
        <taxon>Bacteria</taxon>
        <taxon>Pseudomonadati</taxon>
        <taxon>Campylobacterota</taxon>
        <taxon>Epsilonproteobacteria</taxon>
        <taxon>Campylobacterales</taxon>
        <taxon>Helicobacteraceae</taxon>
        <taxon>Helicobacter</taxon>
    </lineage>
</organism>
<keyword id="KW-0963">Cytoplasm</keyword>
<keyword id="KW-0444">Lipid biosynthesis</keyword>
<keyword id="KW-0443">Lipid metabolism</keyword>
<keyword id="KW-0594">Phospholipid biosynthesis</keyword>
<keyword id="KW-1208">Phospholipid metabolism</keyword>
<keyword id="KW-0808">Transferase</keyword>
<proteinExistence type="inferred from homology"/>
<feature type="chain" id="PRO_0000189888" description="Phosphate acyltransferase">
    <location>
        <begin position="1"/>
        <end position="339"/>
    </location>
</feature>